<organism>
    <name type="scientific">Dictyostelium discoideum</name>
    <name type="common">Social amoeba</name>
    <dbReference type="NCBI Taxonomy" id="44689"/>
    <lineage>
        <taxon>Eukaryota</taxon>
        <taxon>Amoebozoa</taxon>
        <taxon>Evosea</taxon>
        <taxon>Eumycetozoa</taxon>
        <taxon>Dictyostelia</taxon>
        <taxon>Dictyosteliales</taxon>
        <taxon>Dictyosteliaceae</taxon>
        <taxon>Dictyostelium</taxon>
    </lineage>
</organism>
<comment type="function">
    <text evidence="1 3">Positively regulates the activity of the minus-end directed microtubule motor protein dynein. May enhance dynein-mediated microtubule sliding by targeting dynein to the microtubule plus end. Required for several dynein- and microtubule-dependent processes such as the maintenance of Golgi integrity, the coupling of the nucleus and centrosome and dynein/dynactin-mediated interactions of microtubule tips with the cell cortex.</text>
</comment>
<comment type="subunit">
    <text>Interacts with dynein and mtaA/CP224 in the cortical attachment of microtubules. Interacts with rac1A.</text>
</comment>
<comment type="subcellular location">
    <subcellularLocation>
        <location evidence="1 3">Cytoplasm</location>
        <location evidence="1 3">Cytoskeleton</location>
    </subcellularLocation>
    <subcellularLocation>
        <location evidence="1 3">Cytoplasm</location>
        <location evidence="1 3">Cytoskeleton</location>
        <location evidence="1 3">Microtubule organizing center</location>
        <location evidence="1 3">Centrosome</location>
    </subcellularLocation>
    <subcellularLocation>
        <location evidence="1 3">Cytoplasm</location>
        <location evidence="1 3">Cytoskeleton</location>
        <location evidence="1 3">Spindle</location>
    </subcellularLocation>
    <text>Localizes to microtubules and to the centrosome throughout the entire cell cycle. Is part of the centrosomal corona.</text>
</comment>
<comment type="domain">
    <text evidence="1">Dimerization mediated by the LisH domain may be required to activate dynein.</text>
</comment>
<comment type="similarity">
    <text evidence="1">Belongs to the WD repeat LIS1/nudF family.</text>
</comment>
<proteinExistence type="evidence at protein level"/>
<keyword id="KW-0131">Cell cycle</keyword>
<keyword id="KW-0132">Cell division</keyword>
<keyword id="KW-0175">Coiled coil</keyword>
<keyword id="KW-0963">Cytoplasm</keyword>
<keyword id="KW-0206">Cytoskeleton</keyword>
<keyword id="KW-0221">Differentiation</keyword>
<keyword id="KW-0493">Microtubule</keyword>
<keyword id="KW-0498">Mitosis</keyword>
<keyword id="KW-1185">Reference proteome</keyword>
<keyword id="KW-0677">Repeat</keyword>
<keyword id="KW-0813">Transport</keyword>
<keyword id="KW-0853">WD repeat</keyword>
<evidence type="ECO:0000255" key="1">
    <source>
        <dbReference type="HAMAP-Rule" id="MF_03141"/>
    </source>
</evidence>
<evidence type="ECO:0000256" key="2">
    <source>
        <dbReference type="SAM" id="MobiDB-lite"/>
    </source>
</evidence>
<evidence type="ECO:0000269" key="3">
    <source>
    </source>
</evidence>
<accession>Q8I0F4</accession>
<accession>Q54J15</accession>
<dbReference type="EMBL" id="AJ512336">
    <property type="protein sequence ID" value="CAD54457.1"/>
    <property type="molecule type" value="mRNA"/>
</dbReference>
<dbReference type="EMBL" id="AJ512794">
    <property type="protein sequence ID" value="CAD55133.1"/>
    <property type="molecule type" value="mRNA"/>
</dbReference>
<dbReference type="EMBL" id="AAFI02000111">
    <property type="protein sequence ID" value="EAL63213.1"/>
    <property type="molecule type" value="Genomic_DNA"/>
</dbReference>
<dbReference type="RefSeq" id="XP_636715.1">
    <property type="nucleotide sequence ID" value="XM_631623.1"/>
</dbReference>
<dbReference type="SMR" id="Q8I0F4"/>
<dbReference type="FunCoup" id="Q8I0F4">
    <property type="interactions" value="449"/>
</dbReference>
<dbReference type="STRING" id="44689.Q8I0F4"/>
<dbReference type="TCDB" id="1.I.1.1.5">
    <property type="family name" value="the nuclear pore complex (npc) family"/>
</dbReference>
<dbReference type="PaxDb" id="44689-DDB0219930"/>
<dbReference type="EnsemblProtists" id="EAL63213">
    <property type="protein sequence ID" value="EAL63213"/>
    <property type="gene ID" value="DDB_G0288375"/>
</dbReference>
<dbReference type="GeneID" id="8626591"/>
<dbReference type="KEGG" id="ddi:DDB_G0288375"/>
<dbReference type="dictyBase" id="DDB_G0288375">
    <property type="gene designation" value="lis1"/>
</dbReference>
<dbReference type="VEuPathDB" id="AmoebaDB:DDB_G0288375"/>
<dbReference type="eggNOG" id="KOG0295">
    <property type="taxonomic scope" value="Eukaryota"/>
</dbReference>
<dbReference type="HOGENOM" id="CLU_000288_57_15_1"/>
<dbReference type="InParanoid" id="Q8I0F4"/>
<dbReference type="OMA" id="WHVATKE"/>
<dbReference type="PhylomeDB" id="Q8I0F4"/>
<dbReference type="PRO" id="PR:Q8I0F4"/>
<dbReference type="Proteomes" id="UP000002195">
    <property type="component" value="Chromosome 5"/>
</dbReference>
<dbReference type="GO" id="GO:0031592">
    <property type="term" value="C:centrosomal corona"/>
    <property type="evidence" value="ECO:0000314"/>
    <property type="project" value="dictyBase"/>
</dbReference>
<dbReference type="GO" id="GO:0005813">
    <property type="term" value="C:centrosome"/>
    <property type="evidence" value="ECO:0000318"/>
    <property type="project" value="GO_Central"/>
</dbReference>
<dbReference type="GO" id="GO:0005737">
    <property type="term" value="C:cytoplasm"/>
    <property type="evidence" value="ECO:0007669"/>
    <property type="project" value="UniProtKB-UniRule"/>
</dbReference>
<dbReference type="GO" id="GO:0005874">
    <property type="term" value="C:microtubule"/>
    <property type="evidence" value="ECO:0007669"/>
    <property type="project" value="UniProtKB-KW"/>
</dbReference>
<dbReference type="GO" id="GO:0005875">
    <property type="term" value="C:microtubule associated complex"/>
    <property type="evidence" value="ECO:0007669"/>
    <property type="project" value="UniProtKB-UniRule"/>
</dbReference>
<dbReference type="GO" id="GO:0015630">
    <property type="term" value="C:microtubule cytoskeleton"/>
    <property type="evidence" value="ECO:0000314"/>
    <property type="project" value="dictyBase"/>
</dbReference>
<dbReference type="GO" id="GO:0005819">
    <property type="term" value="C:spindle"/>
    <property type="evidence" value="ECO:0007669"/>
    <property type="project" value="UniProtKB-SubCell"/>
</dbReference>
<dbReference type="GO" id="GO:0070840">
    <property type="term" value="F:dynein complex binding"/>
    <property type="evidence" value="ECO:0007669"/>
    <property type="project" value="UniProtKB-UniRule"/>
</dbReference>
<dbReference type="GO" id="GO:0045504">
    <property type="term" value="F:dynein heavy chain binding"/>
    <property type="evidence" value="ECO:0000353"/>
    <property type="project" value="dictyBase"/>
</dbReference>
<dbReference type="GO" id="GO:0008017">
    <property type="term" value="F:microtubule binding"/>
    <property type="evidence" value="ECO:0000314"/>
    <property type="project" value="dictyBase"/>
</dbReference>
<dbReference type="GO" id="GO:0031267">
    <property type="term" value="F:small GTPase binding"/>
    <property type="evidence" value="ECO:0000353"/>
    <property type="project" value="dictyBase"/>
</dbReference>
<dbReference type="GO" id="GO:0140582">
    <property type="term" value="P:adenylate cyclase-activating G protein-coupled cAMP receptor signaling pathway"/>
    <property type="evidence" value="ECO:0000316"/>
    <property type="project" value="dictyBase"/>
</dbReference>
<dbReference type="GO" id="GO:0030154">
    <property type="term" value="P:cell differentiation"/>
    <property type="evidence" value="ECO:0007669"/>
    <property type="project" value="UniProtKB-KW"/>
</dbReference>
<dbReference type="GO" id="GO:0051301">
    <property type="term" value="P:cell division"/>
    <property type="evidence" value="ECO:0007669"/>
    <property type="project" value="UniProtKB-KW"/>
</dbReference>
<dbReference type="GO" id="GO:0051642">
    <property type="term" value="P:centrosome localization"/>
    <property type="evidence" value="ECO:0000315"/>
    <property type="project" value="dictyBase"/>
</dbReference>
<dbReference type="GO" id="GO:0000132">
    <property type="term" value="P:establishment of mitotic spindle orientation"/>
    <property type="evidence" value="ECO:0007669"/>
    <property type="project" value="UniProtKB-UniRule"/>
</dbReference>
<dbReference type="GO" id="GO:0051645">
    <property type="term" value="P:Golgi localization"/>
    <property type="evidence" value="ECO:0000315"/>
    <property type="project" value="dictyBase"/>
</dbReference>
<dbReference type="GO" id="GO:0051012">
    <property type="term" value="P:microtubule sliding"/>
    <property type="evidence" value="ECO:0007669"/>
    <property type="project" value="UniProtKB-UniRule"/>
</dbReference>
<dbReference type="GO" id="GO:0006909">
    <property type="term" value="P:phagocytosis"/>
    <property type="evidence" value="ECO:0000315"/>
    <property type="project" value="dictyBase"/>
</dbReference>
<dbReference type="GO" id="GO:0071539">
    <property type="term" value="P:protein localization to centrosome"/>
    <property type="evidence" value="ECO:0000315"/>
    <property type="project" value="dictyBase"/>
</dbReference>
<dbReference type="CDD" id="cd00200">
    <property type="entry name" value="WD40"/>
    <property type="match status" value="1"/>
</dbReference>
<dbReference type="FunFam" id="2.130.10.10:FF:000342">
    <property type="entry name" value="Nuclear distribution protein PAC1"/>
    <property type="match status" value="1"/>
</dbReference>
<dbReference type="FunFam" id="1.20.960.30:FF:000002">
    <property type="entry name" value="Platelet-activating factor acetylhydrolase ib"/>
    <property type="match status" value="1"/>
</dbReference>
<dbReference type="Gene3D" id="1.20.960.30">
    <property type="match status" value="1"/>
</dbReference>
<dbReference type="Gene3D" id="2.130.10.10">
    <property type="entry name" value="YVTN repeat-like/Quinoprotein amine dehydrogenase"/>
    <property type="match status" value="1"/>
</dbReference>
<dbReference type="HAMAP" id="MF_03141">
    <property type="entry name" value="lis1"/>
    <property type="match status" value="1"/>
</dbReference>
<dbReference type="InterPro" id="IPR017252">
    <property type="entry name" value="Dynein_regulator_LIS1"/>
</dbReference>
<dbReference type="InterPro" id="IPR020472">
    <property type="entry name" value="G-protein_beta_WD-40_rep"/>
</dbReference>
<dbReference type="InterPro" id="IPR037190">
    <property type="entry name" value="LIS1_N"/>
</dbReference>
<dbReference type="InterPro" id="IPR006594">
    <property type="entry name" value="LisH"/>
</dbReference>
<dbReference type="InterPro" id="IPR056795">
    <property type="entry name" value="PAC1-like_LisH-like_dom"/>
</dbReference>
<dbReference type="InterPro" id="IPR015943">
    <property type="entry name" value="WD40/YVTN_repeat-like_dom_sf"/>
</dbReference>
<dbReference type="InterPro" id="IPR019775">
    <property type="entry name" value="WD40_repeat_CS"/>
</dbReference>
<dbReference type="InterPro" id="IPR036322">
    <property type="entry name" value="WD40_repeat_dom_sf"/>
</dbReference>
<dbReference type="InterPro" id="IPR001680">
    <property type="entry name" value="WD40_rpt"/>
</dbReference>
<dbReference type="InterPro" id="IPR050505">
    <property type="entry name" value="WDR55_POC1"/>
</dbReference>
<dbReference type="PANTHER" id="PTHR44019:SF8">
    <property type="entry name" value="POC1 CENTRIOLAR PROTEIN HOMOLOG"/>
    <property type="match status" value="1"/>
</dbReference>
<dbReference type="PANTHER" id="PTHR44019">
    <property type="entry name" value="WD REPEAT-CONTAINING PROTEIN 55"/>
    <property type="match status" value="1"/>
</dbReference>
<dbReference type="Pfam" id="PF24951">
    <property type="entry name" value="LisH_PAC1"/>
    <property type="match status" value="1"/>
</dbReference>
<dbReference type="Pfam" id="PF00400">
    <property type="entry name" value="WD40"/>
    <property type="match status" value="7"/>
</dbReference>
<dbReference type="PIRSF" id="PIRSF037647">
    <property type="entry name" value="Dynein_regulator_Lis1"/>
    <property type="match status" value="1"/>
</dbReference>
<dbReference type="PRINTS" id="PR00320">
    <property type="entry name" value="GPROTEINBRPT"/>
</dbReference>
<dbReference type="SMART" id="SM00667">
    <property type="entry name" value="LisH"/>
    <property type="match status" value="1"/>
</dbReference>
<dbReference type="SMART" id="SM00320">
    <property type="entry name" value="WD40"/>
    <property type="match status" value="7"/>
</dbReference>
<dbReference type="SUPFAM" id="SSF109925">
    <property type="entry name" value="Lissencephaly-1 protein (Lis-1, PAF-AH alpha) N-terminal domain"/>
    <property type="match status" value="1"/>
</dbReference>
<dbReference type="SUPFAM" id="SSF50978">
    <property type="entry name" value="WD40 repeat-like"/>
    <property type="match status" value="1"/>
</dbReference>
<dbReference type="PROSITE" id="PS50896">
    <property type="entry name" value="LISH"/>
    <property type="match status" value="1"/>
</dbReference>
<dbReference type="PROSITE" id="PS00678">
    <property type="entry name" value="WD_REPEATS_1"/>
    <property type="match status" value="6"/>
</dbReference>
<dbReference type="PROSITE" id="PS50082">
    <property type="entry name" value="WD_REPEATS_2"/>
    <property type="match status" value="7"/>
</dbReference>
<dbReference type="PROSITE" id="PS50294">
    <property type="entry name" value="WD_REPEATS_REGION"/>
    <property type="match status" value="1"/>
</dbReference>
<protein>
    <recommendedName>
        <fullName evidence="1">Lissencephaly-1 homolog</fullName>
    </recommendedName>
    <alternativeName>
        <fullName>DdLIS1</fullName>
    </alternativeName>
</protein>
<gene>
    <name type="primary">lis1</name>
    <name type="ORF">DDB_G0288375</name>
</gene>
<reference key="1">
    <citation type="journal article" date="2005" name="Mol. Biol. Cell">
        <title>Dictyostelium LIS1 is a centrosomal protein required for microtubule/cell cortex interactions, nucleus/centrosome linkage, and actin dynamics.</title>
        <authorList>
            <person name="Rehberg M."/>
            <person name="Kleylein-Sohn J."/>
            <person name="Faix J."/>
            <person name="Ho T.-H."/>
            <person name="Schulz I."/>
            <person name="Graef R."/>
        </authorList>
    </citation>
    <scope>NUCLEOTIDE SEQUENCE [MRNA]</scope>
    <scope>FUNCTION</scope>
    <scope>SUBCELLULAR LOCATION</scope>
    <scope>MUTAGENESIS OF ASP-325</scope>
</reference>
<reference key="2">
    <citation type="journal article" date="2005" name="Nature">
        <title>The genome of the social amoeba Dictyostelium discoideum.</title>
        <authorList>
            <person name="Eichinger L."/>
            <person name="Pachebat J.A."/>
            <person name="Gloeckner G."/>
            <person name="Rajandream M.A."/>
            <person name="Sucgang R."/>
            <person name="Berriman M."/>
            <person name="Song J."/>
            <person name="Olsen R."/>
            <person name="Szafranski K."/>
            <person name="Xu Q."/>
            <person name="Tunggal B."/>
            <person name="Kummerfeld S."/>
            <person name="Madera M."/>
            <person name="Konfortov B.A."/>
            <person name="Rivero F."/>
            <person name="Bankier A.T."/>
            <person name="Lehmann R."/>
            <person name="Hamlin N."/>
            <person name="Davies R."/>
            <person name="Gaudet P."/>
            <person name="Fey P."/>
            <person name="Pilcher K."/>
            <person name="Chen G."/>
            <person name="Saunders D."/>
            <person name="Sodergren E.J."/>
            <person name="Davis P."/>
            <person name="Kerhornou A."/>
            <person name="Nie X."/>
            <person name="Hall N."/>
            <person name="Anjard C."/>
            <person name="Hemphill L."/>
            <person name="Bason N."/>
            <person name="Farbrother P."/>
            <person name="Desany B."/>
            <person name="Just E."/>
            <person name="Morio T."/>
            <person name="Rost R."/>
            <person name="Churcher C.M."/>
            <person name="Cooper J."/>
            <person name="Haydock S."/>
            <person name="van Driessche N."/>
            <person name="Cronin A."/>
            <person name="Goodhead I."/>
            <person name="Muzny D.M."/>
            <person name="Mourier T."/>
            <person name="Pain A."/>
            <person name="Lu M."/>
            <person name="Harper D."/>
            <person name="Lindsay R."/>
            <person name="Hauser H."/>
            <person name="James K.D."/>
            <person name="Quiles M."/>
            <person name="Madan Babu M."/>
            <person name="Saito T."/>
            <person name="Buchrieser C."/>
            <person name="Wardroper A."/>
            <person name="Felder M."/>
            <person name="Thangavelu M."/>
            <person name="Johnson D."/>
            <person name="Knights A."/>
            <person name="Loulseged H."/>
            <person name="Mungall K.L."/>
            <person name="Oliver K."/>
            <person name="Price C."/>
            <person name="Quail M.A."/>
            <person name="Urushihara H."/>
            <person name="Hernandez J."/>
            <person name="Rabbinowitsch E."/>
            <person name="Steffen D."/>
            <person name="Sanders M."/>
            <person name="Ma J."/>
            <person name="Kohara Y."/>
            <person name="Sharp S."/>
            <person name="Simmonds M.N."/>
            <person name="Spiegler S."/>
            <person name="Tivey A."/>
            <person name="Sugano S."/>
            <person name="White B."/>
            <person name="Walker D."/>
            <person name="Woodward J.R."/>
            <person name="Winckler T."/>
            <person name="Tanaka Y."/>
            <person name="Shaulsky G."/>
            <person name="Schleicher M."/>
            <person name="Weinstock G.M."/>
            <person name="Rosenthal A."/>
            <person name="Cox E.C."/>
            <person name="Chisholm R.L."/>
            <person name="Gibbs R.A."/>
            <person name="Loomis W.F."/>
            <person name="Platzer M."/>
            <person name="Kay R.R."/>
            <person name="Williams J.G."/>
            <person name="Dear P.H."/>
            <person name="Noegel A.A."/>
            <person name="Barrell B.G."/>
            <person name="Kuspa A."/>
        </authorList>
    </citation>
    <scope>NUCLEOTIDE SEQUENCE [LARGE SCALE GENOMIC DNA]</scope>
    <source>
        <strain>AX4</strain>
    </source>
</reference>
<feature type="chain" id="PRO_0000327783" description="Lissencephaly-1 homolog">
    <location>
        <begin position="1"/>
        <end position="419"/>
    </location>
</feature>
<feature type="domain" description="LisH" evidence="1">
    <location>
        <begin position="7"/>
        <end position="39"/>
    </location>
</feature>
<feature type="repeat" description="WD 1">
    <location>
        <begin position="104"/>
        <end position="145"/>
    </location>
</feature>
<feature type="repeat" description="WD 2">
    <location>
        <begin position="147"/>
        <end position="187"/>
    </location>
</feature>
<feature type="repeat" description="WD 3">
    <location>
        <begin position="188"/>
        <end position="227"/>
    </location>
</feature>
<feature type="repeat" description="WD 4">
    <location>
        <begin position="230"/>
        <end position="271"/>
    </location>
</feature>
<feature type="repeat" description="WD 5">
    <location>
        <begin position="272"/>
        <end position="341"/>
    </location>
</feature>
<feature type="repeat" description="WD 6">
    <location>
        <begin position="344"/>
        <end position="385"/>
    </location>
</feature>
<feature type="repeat" description="WD 7">
    <location>
        <begin position="387"/>
        <end position="419"/>
    </location>
</feature>
<feature type="region of interest" description="Disordered" evidence="2">
    <location>
        <begin position="74"/>
        <end position="100"/>
    </location>
</feature>
<feature type="coiled-coil region" evidence="1">
    <location>
        <begin position="52"/>
        <end position="79"/>
    </location>
</feature>
<feature type="compositionally biased region" description="Basic and acidic residues" evidence="2">
    <location>
        <begin position="87"/>
        <end position="100"/>
    </location>
</feature>
<feature type="mutagenesis site" description="Disruption of the microtubule skeleton during interphase, dispersal of the Golgi apparatus, and reduction of cellular F-actin content." evidence="3">
    <original>D</original>
    <variation>H</variation>
    <location>
        <position position="325"/>
    </location>
</feature>
<sequence>MVLTSKQKEELNGSILDYFESSQYKSSFEEFKKETGTELDVKKKGLLEKKWTSVIRLQKKVLDLEAKVAQLEEELNSGGGRGGGRGRGKEDALPRPPEKHILTGHRNCINSVKFHPSFSLMVSASEDATIKVWDFESGEFERTLKGHTNAVQDIDFDKTGNLLASCSADLTIKLWDFQTYDCVKTLHGHDHNVSCVRFTPSGDQLISSSRDKTIKVWEAATGYCIKTLVGHEDWVRKITVSEDGSCIASCSNDQTIKTWNIVKGECLATYREHSHVVECLAFSTANIIDIPGSLLSTPEGKSKVKQGPGGNLVGQCGYLATGSRDKTIKIWELATGRCLATYIGHDNWVRAVRFHPCGKFLLSVGDDKTIRVWDIAQGRCIKTINEAHTHFISCLDFCLHNPHIATGGVDDVIKVWKLQ</sequence>
<name>LIS1_DICDI</name>